<evidence type="ECO:0000250" key="1">
    <source>
        <dbReference type="UniProtKB" id="Q3UZ57"/>
    </source>
</evidence>
<evidence type="ECO:0000250" key="2">
    <source>
        <dbReference type="UniProtKB" id="Q5T1B0"/>
    </source>
</evidence>
<evidence type="ECO:0000255" key="3"/>
<evidence type="ECO:0000256" key="4">
    <source>
        <dbReference type="SAM" id="MobiDB-lite"/>
    </source>
</evidence>
<evidence type="ECO:0000303" key="5">
    <source ref="1"/>
</evidence>
<evidence type="ECO:0000303" key="6">
    <source ref="3"/>
</evidence>
<evidence type="ECO:0000305" key="7"/>
<protein>
    <recommendedName>
        <fullName>Axonemal dynein light chain domain-containing protein 1</fullName>
    </recommendedName>
</protein>
<feature type="chain" id="PRO_0000284869" description="Axonemal dynein light chain domain-containing protein 1">
    <location>
        <begin position="1"/>
        <end position="855"/>
    </location>
</feature>
<feature type="region of interest" description="Disordered" evidence="4">
    <location>
        <begin position="1"/>
        <end position="31"/>
    </location>
</feature>
<feature type="coiled-coil region" evidence="3">
    <location>
        <begin position="316"/>
        <end position="402"/>
    </location>
</feature>
<feature type="coiled-coil region" evidence="3">
    <location>
        <begin position="451"/>
        <end position="480"/>
    </location>
</feature>
<feature type="coiled-coil region" evidence="3">
    <location>
        <begin position="571"/>
        <end position="596"/>
    </location>
</feature>
<feature type="compositionally biased region" description="Polar residues" evidence="4">
    <location>
        <begin position="1"/>
        <end position="17"/>
    </location>
</feature>
<feature type="splice variant" id="VSP_024709" description="In isoform 2." evidence="5">
    <location>
        <begin position="1"/>
        <end position="246"/>
    </location>
</feature>
<feature type="splice variant" id="VSP_024710" description="In isoform 3." evidence="6">
    <original>MLNEKKEE</original>
    <variation>IRPEEEAG</variation>
    <location>
        <begin position="521"/>
        <end position="528"/>
    </location>
</feature>
<feature type="splice variant" id="VSP_024711" description="In isoform 3." evidence="6">
    <location>
        <begin position="529"/>
        <end position="855"/>
    </location>
</feature>
<feature type="splice variant" id="VSP_024712" description="In isoform 2." evidence="5">
    <original>LCSRRILLP</original>
    <variation>QEDEEESKEDRKLQEENKEKAEEQPSTSTEEEKLIRFIGEDENVHSKPLFETDVLSSWKESAKQGTLAQKYLEAMAVIEHMQEKLLEVEKRAKQAEE</variation>
    <location>
        <begin position="847"/>
        <end position="855"/>
    </location>
</feature>
<feature type="sequence conflict" description="In Ref. 3; BAE02447." evidence="7" ref="3">
    <original>L</original>
    <variation>I</variation>
    <location>
        <position position="36"/>
    </location>
</feature>
<feature type="sequence conflict" description="In Ref. 2; BAB69712." evidence="7" ref="2">
    <original>K</original>
    <variation>R</variation>
    <location>
        <position position="427"/>
    </location>
</feature>
<feature type="sequence conflict" description="In Ref. 1; BAB62952." evidence="7" ref="1">
    <original>M</original>
    <variation>I</variation>
    <location>
        <position position="842"/>
    </location>
</feature>
<sequence length="855" mass="99517">MSLPKTPSTPLNSASTSESKKLVSVATEGTRGLPELKEKKNMVDRSKPLPTSLLNEFIPKEVLLSLTYAANAGPCPENLLPPKKIKTPKGTLPRLVDHVWHHPVRRNKFKYLIDHPVSLTGAGRDISFLYDVKYTKGQTREKAVCPPHLARSLQSHDGVIVPHKPKTLTDTLIPEEFHIVSSTGVSGLECYDDKYTTLLTDSENRLLLFPSMKPNKRVEVAQLNDVMDTMLERAGVENQEYTGPTKMHKLLHILKKEQTIYNTIFHELIRQVSVDCADRGELLSKVRERYVQMLDQIARQMIDFYKDLVTQRVMDQRILEELYNFKHVIEELTRELCLVRAHDVKLTKETEKAHKDLAQALLDAEKNAKMVEEYHDLYTLQRERMENDMKQLMAERDIWSSATYELALKVIERNRVILARRLYLNEKGWNKYTKHLIILLANKDTEDLALLQKLTQKWRNLVNKFKQEVEEMEESTRETLKIVEKGLTKWQESFNEKDILSPNNGNVFDSVILDFKQWQKMLNEKKEEFTGDVLLSKYDTLKIIKHLQENWTDIGLGIFNRHKSLEGELPSERQYMEEIIKNIQKLYKEYEIRINGDNGYSKILPILISSLDFCSFKLENLEFPDTPLEEWQEIDEKINEMKLQLDLLLNLTGIVPQHIDMDSVSVLQAYIFNMIQQWLLKIGNEINNGNIELQRHMDELHISMIQWMVNLLILMIPNFTDQDCLLKLEEESAEKHDIGVARLELDAIELTRKLYQYSRYLSSSCEGMVTAMALSKSTTSHRNATEDLYEVDKLKKECYEWINTCSCLLSNIKGRKITLLTYEEIEQLLEEEAVKEFIEPEMDESLLCSRRILLP</sequence>
<comment type="function">
    <text evidence="1">May be essential for spermiogenesis and male fertility probably by regulating the manchette dynamics, spermatid head shaping and sperm flagellum assembly.</text>
</comment>
<comment type="subcellular location">
    <subcellularLocation>
        <location evidence="2">Cytoplasm</location>
    </subcellularLocation>
</comment>
<comment type="alternative products">
    <event type="alternative splicing"/>
    <isoform>
        <id>Q95LP5-1</id>
        <name>1</name>
        <sequence type="displayed"/>
    </isoform>
    <isoform>
        <id>Q95LP5-2</id>
        <name>2</name>
        <sequence type="described" ref="VSP_024709 VSP_024712"/>
    </isoform>
    <isoform>
        <id>Q95LP5-3</id>
        <name>3</name>
        <sequence type="described" ref="VSP_024710 VSP_024711"/>
    </isoform>
</comment>
<accession>Q95LP5</accession>
<accession>Q4R371</accession>
<accession>Q95K20</accession>
<reference key="1">
    <citation type="submission" date="2001-08" db="EMBL/GenBank/DDBJ databases">
        <title>Isolation of novel full-length cDNA clones from macaque testis cDNA libraries.</title>
        <authorList>
            <person name="Hashimoto K."/>
            <person name="Osada N."/>
            <person name="Hida M."/>
            <person name="Kusuda J."/>
            <person name="Tanuma R."/>
            <person name="Hirai M."/>
            <person name="Terao K."/>
            <person name="Sugano S."/>
        </authorList>
    </citation>
    <scope>NUCLEOTIDE SEQUENCE [LARGE SCALE MRNA] (ISOFORM 2)</scope>
    <source>
        <tissue>Testis</tissue>
    </source>
</reference>
<reference key="2">
    <citation type="journal article" date="2002" name="BMC Genomics">
        <title>Cynomolgus monkey testicular cDNAs for discovery of novel human genes in the human genome sequence.</title>
        <authorList>
            <person name="Osada N."/>
            <person name="Hida M."/>
            <person name="Kusuda J."/>
            <person name="Tanuma R."/>
            <person name="Hirata M."/>
            <person name="Suto Y."/>
            <person name="Hirai M."/>
            <person name="Terao K."/>
            <person name="Sugano S."/>
            <person name="Hashimoto K."/>
        </authorList>
    </citation>
    <scope>NUCLEOTIDE SEQUENCE [LARGE SCALE MRNA] (ISOFORM 1)</scope>
    <source>
        <tissue>Testis</tissue>
    </source>
</reference>
<reference key="3">
    <citation type="submission" date="2005-06" db="EMBL/GenBank/DDBJ databases">
        <title>DNA sequences of macaque genes expressed in brain or testis and its evolutionary implications.</title>
        <authorList>
            <consortium name="International consortium for macaque cDNA sequencing and analysis"/>
        </authorList>
    </citation>
    <scope>NUCLEOTIDE SEQUENCE [LARGE SCALE MRNA] (ISOFORM 3)</scope>
    <source>
        <tissue>Testis</tissue>
    </source>
</reference>
<keyword id="KW-0025">Alternative splicing</keyword>
<keyword id="KW-0175">Coiled coil</keyword>
<keyword id="KW-0963">Cytoplasm</keyword>
<keyword id="KW-0221">Differentiation</keyword>
<keyword id="KW-1185">Reference proteome</keyword>
<keyword id="KW-0744">Spermatogenesis</keyword>
<organism>
    <name type="scientific">Macaca fascicularis</name>
    <name type="common">Crab-eating macaque</name>
    <name type="synonym">Cynomolgus monkey</name>
    <dbReference type="NCBI Taxonomy" id="9541"/>
    <lineage>
        <taxon>Eukaryota</taxon>
        <taxon>Metazoa</taxon>
        <taxon>Chordata</taxon>
        <taxon>Craniata</taxon>
        <taxon>Vertebrata</taxon>
        <taxon>Euteleostomi</taxon>
        <taxon>Mammalia</taxon>
        <taxon>Eutheria</taxon>
        <taxon>Euarchontoglires</taxon>
        <taxon>Primates</taxon>
        <taxon>Haplorrhini</taxon>
        <taxon>Catarrhini</taxon>
        <taxon>Cercopithecidae</taxon>
        <taxon>Cercopithecinae</taxon>
        <taxon>Macaca</taxon>
    </lineage>
</organism>
<proteinExistence type="evidence at transcript level"/>
<gene>
    <name type="primary">AXDND1</name>
    <name type="ORF">QtsA-11085</name>
    <name type="ORF">QtsA-15492</name>
    <name type="ORF">QtsA-19166</name>
</gene>
<dbReference type="EMBL" id="AB070007">
    <property type="protein sequence ID" value="BAB62952.1"/>
    <property type="molecule type" value="mRNA"/>
</dbReference>
<dbReference type="EMBL" id="AB072743">
    <property type="protein sequence ID" value="BAB69712.1"/>
    <property type="molecule type" value="mRNA"/>
</dbReference>
<dbReference type="EMBL" id="AB179396">
    <property type="protein sequence ID" value="BAE02447.1"/>
    <property type="molecule type" value="mRNA"/>
</dbReference>
<dbReference type="SMR" id="Q95LP5"/>
<dbReference type="STRING" id="9541.ENSMFAP00000022516"/>
<dbReference type="eggNOG" id="ENOG502QSV4">
    <property type="taxonomic scope" value="Eukaryota"/>
</dbReference>
<dbReference type="Proteomes" id="UP000233100">
    <property type="component" value="Unplaced"/>
</dbReference>
<dbReference type="GO" id="GO:0005737">
    <property type="term" value="C:cytoplasm"/>
    <property type="evidence" value="ECO:0000250"/>
    <property type="project" value="UniProtKB"/>
</dbReference>
<dbReference type="GO" id="GO:1905198">
    <property type="term" value="P:manchette assembly"/>
    <property type="evidence" value="ECO:0000250"/>
    <property type="project" value="UniProtKB"/>
</dbReference>
<dbReference type="GO" id="GO:0007283">
    <property type="term" value="P:spermatogenesis"/>
    <property type="evidence" value="ECO:0000250"/>
    <property type="project" value="UniProtKB"/>
</dbReference>
<dbReference type="InterPro" id="IPR052845">
    <property type="entry name" value="Axonemal_dynein_LC_domain"/>
</dbReference>
<dbReference type="InterPro" id="IPR019347">
    <property type="entry name" value="Axonemal_dynein_light_chain"/>
</dbReference>
<dbReference type="PANTHER" id="PTHR23052">
    <property type="entry name" value="AXONEMAL DYNEIN LIGHT CHAIN DOMAIN-CONTAINING PROTEIN 1"/>
    <property type="match status" value="1"/>
</dbReference>
<dbReference type="PANTHER" id="PTHR23052:SF1">
    <property type="entry name" value="AXONEMAL DYNEIN LIGHT CHAIN DOMAIN-CONTAINING PROTEIN 1"/>
    <property type="match status" value="1"/>
</dbReference>
<dbReference type="Pfam" id="PF10211">
    <property type="entry name" value="Ax_dynein_light"/>
    <property type="match status" value="1"/>
</dbReference>
<name>AXDN1_MACFA</name>